<comment type="function">
    <text evidence="2">Involved in pre-mRNA splicing as component of the spliceosome. Component of the PRP19-CDC5L complex that forms an integral part of the spliceosome and is required for activating pre-mRNA splicing. As a component of the minor spliceosome, involved in the splicing of U12-type introns in pre-mRNAs (By similarity).</text>
</comment>
<comment type="subunit">
    <text evidence="2">Identified in the spliceosome C complex. Component of the PRP19-CDC5L splicing complex composed of a core complex comprising a homotetramer of PRPF19, CDC5L, PLRG1 and BCAS2, and at least three less stably associated proteins CTNNBL1, CWC15 and HSPA8. Interacts directly with CTNNBL1 in the complex. Component of the minor spliceosome, which splices U12-type introns (By similarity).</text>
</comment>
<comment type="subcellular location">
    <subcellularLocation>
        <location evidence="2">Nucleus</location>
    </subcellularLocation>
</comment>
<comment type="similarity">
    <text evidence="5">Belongs to the CWC15 family.</text>
</comment>
<gene>
    <name type="primary">CWC15</name>
</gene>
<proteinExistence type="evidence at transcript level"/>
<keyword id="KW-0007">Acetylation</keyword>
<keyword id="KW-0175">Coiled coil</keyword>
<keyword id="KW-0507">mRNA processing</keyword>
<keyword id="KW-0508">mRNA splicing</keyword>
<keyword id="KW-0539">Nucleus</keyword>
<keyword id="KW-0597">Phosphoprotein</keyword>
<keyword id="KW-1185">Reference proteome</keyword>
<keyword id="KW-0747">Spliceosome</keyword>
<reference key="1">
    <citation type="submission" date="2005-09" db="EMBL/GenBank/DDBJ databases">
        <authorList>
            <consortium name="NIH - Mammalian Gene Collection (MGC) project"/>
        </authorList>
    </citation>
    <scope>NUCLEOTIDE SEQUENCE [LARGE SCALE MRNA]</scope>
    <source>
        <strain>Hereford</strain>
        <tissue>Heart ventricle</tissue>
    </source>
</reference>
<name>CWC15_BOVIN</name>
<accession>Q2KJD3</accession>
<dbReference type="EMBL" id="BC105398">
    <property type="protein sequence ID" value="AAI05399.1"/>
    <property type="molecule type" value="mRNA"/>
</dbReference>
<dbReference type="RefSeq" id="NP_001039864.1">
    <property type="nucleotide sequence ID" value="NM_001046399.2"/>
</dbReference>
<dbReference type="RefSeq" id="XP_005215821.1">
    <property type="nucleotide sequence ID" value="XM_005215764.3"/>
</dbReference>
<dbReference type="RefSeq" id="XP_005215822.1">
    <property type="nucleotide sequence ID" value="XM_005215765.5"/>
</dbReference>
<dbReference type="SMR" id="Q2KJD3"/>
<dbReference type="FunCoup" id="Q2KJD3">
    <property type="interactions" value="4637"/>
</dbReference>
<dbReference type="STRING" id="9913.ENSBTAP00000010403"/>
<dbReference type="PaxDb" id="9913-ENSBTAP00000010403"/>
<dbReference type="Ensembl" id="ENSBTAT00000010403.4">
    <property type="protein sequence ID" value="ENSBTAP00000010403.3"/>
    <property type="gene ID" value="ENSBTAG00000007913.4"/>
</dbReference>
<dbReference type="GeneID" id="535258"/>
<dbReference type="KEGG" id="bta:535258"/>
<dbReference type="CTD" id="51503"/>
<dbReference type="VEuPathDB" id="HostDB:ENSBTAG00000007913"/>
<dbReference type="VGNC" id="VGNC:54863">
    <property type="gene designation" value="CWC15"/>
</dbReference>
<dbReference type="eggNOG" id="KOG3228">
    <property type="taxonomic scope" value="Eukaryota"/>
</dbReference>
<dbReference type="GeneTree" id="ENSGT00390000012084"/>
<dbReference type="HOGENOM" id="CLU_068312_0_1_1"/>
<dbReference type="InParanoid" id="Q2KJD3"/>
<dbReference type="OMA" id="KYREHGQ"/>
<dbReference type="OrthoDB" id="30179at2759"/>
<dbReference type="TreeFam" id="TF321323"/>
<dbReference type="Reactome" id="R-BTA-72163">
    <property type="pathway name" value="mRNA Splicing - Major Pathway"/>
</dbReference>
<dbReference type="Proteomes" id="UP000009136">
    <property type="component" value="Chromosome 15"/>
</dbReference>
<dbReference type="Bgee" id="ENSBTAG00000007913">
    <property type="expression patterns" value="Expressed in oocyte and 103 other cell types or tissues"/>
</dbReference>
<dbReference type="GO" id="GO:0071013">
    <property type="term" value="C:catalytic step 2 spliceosome"/>
    <property type="evidence" value="ECO:0000318"/>
    <property type="project" value="GO_Central"/>
</dbReference>
<dbReference type="GO" id="GO:0005739">
    <property type="term" value="C:mitochondrion"/>
    <property type="evidence" value="ECO:0007669"/>
    <property type="project" value="Ensembl"/>
</dbReference>
<dbReference type="GO" id="GO:0016607">
    <property type="term" value="C:nuclear speck"/>
    <property type="evidence" value="ECO:0007669"/>
    <property type="project" value="Ensembl"/>
</dbReference>
<dbReference type="GO" id="GO:0005634">
    <property type="term" value="C:nucleus"/>
    <property type="evidence" value="ECO:0000250"/>
    <property type="project" value="UniProtKB"/>
</dbReference>
<dbReference type="GO" id="GO:0000974">
    <property type="term" value="C:Prp19 complex"/>
    <property type="evidence" value="ECO:0007669"/>
    <property type="project" value="Ensembl"/>
</dbReference>
<dbReference type="GO" id="GO:0005681">
    <property type="term" value="C:spliceosomal complex"/>
    <property type="evidence" value="ECO:0000250"/>
    <property type="project" value="UniProtKB"/>
</dbReference>
<dbReference type="GO" id="GO:0071007">
    <property type="term" value="C:U2-type catalytic step 2 spliceosome"/>
    <property type="evidence" value="ECO:0000250"/>
    <property type="project" value="UniProtKB"/>
</dbReference>
<dbReference type="GO" id="GO:0003723">
    <property type="term" value="F:RNA binding"/>
    <property type="evidence" value="ECO:0000250"/>
    <property type="project" value="UniProtKB"/>
</dbReference>
<dbReference type="GO" id="GO:0045292">
    <property type="term" value="P:mRNA cis splicing, via spliceosome"/>
    <property type="evidence" value="ECO:0000318"/>
    <property type="project" value="GO_Central"/>
</dbReference>
<dbReference type="GO" id="GO:0000398">
    <property type="term" value="P:mRNA splicing, via spliceosome"/>
    <property type="evidence" value="ECO:0000250"/>
    <property type="project" value="UniProtKB"/>
</dbReference>
<dbReference type="InterPro" id="IPR006973">
    <property type="entry name" value="Cwf_Cwc_15"/>
</dbReference>
<dbReference type="PANTHER" id="PTHR12718">
    <property type="entry name" value="CELL CYCLE CONTROL PROTEIN CWF15"/>
    <property type="match status" value="1"/>
</dbReference>
<dbReference type="PANTHER" id="PTHR12718:SF2">
    <property type="entry name" value="SPLICEOSOME-ASSOCIATED PROTEIN CWC15 HOMOLOG"/>
    <property type="match status" value="1"/>
</dbReference>
<dbReference type="Pfam" id="PF04889">
    <property type="entry name" value="Cwf_Cwc_15"/>
    <property type="match status" value="1"/>
</dbReference>
<sequence length="231" mass="26869">MTTAARPTFEPARGGRGKGEGDLSQLSKQYSSRDLPSHTKIKYRQTTQDAPEEVRNRDFRRELEERERAAAREKNRDRPTREHTTSSSVSKKPRLDQIPAANLDADDPLTDEEDEDEDFEEESDDDDTAALLAELEKIKKERAEEQARKEQEQKAEEERIRMENILSGNPLLNLTGPSQPQANFKVKRRWDDDVVFKNCAKGVDDQKKDKRFVNDTLRSEFHKKFMEKYIK</sequence>
<protein>
    <recommendedName>
        <fullName>Spliceosome-associated protein CWC15 homolog</fullName>
    </recommendedName>
</protein>
<organism>
    <name type="scientific">Bos taurus</name>
    <name type="common">Bovine</name>
    <dbReference type="NCBI Taxonomy" id="9913"/>
    <lineage>
        <taxon>Eukaryota</taxon>
        <taxon>Metazoa</taxon>
        <taxon>Chordata</taxon>
        <taxon>Craniata</taxon>
        <taxon>Vertebrata</taxon>
        <taxon>Euteleostomi</taxon>
        <taxon>Mammalia</taxon>
        <taxon>Eutheria</taxon>
        <taxon>Laurasiatheria</taxon>
        <taxon>Artiodactyla</taxon>
        <taxon>Ruminantia</taxon>
        <taxon>Pecora</taxon>
        <taxon>Bovidae</taxon>
        <taxon>Bovinae</taxon>
        <taxon>Bos</taxon>
    </lineage>
</organism>
<feature type="initiator methionine" description="Removed" evidence="2">
    <location>
        <position position="1"/>
    </location>
</feature>
<feature type="chain" id="PRO_0000291542" description="Spliceosome-associated protein CWC15 homolog">
    <location>
        <begin position="2"/>
        <end position="231"/>
    </location>
</feature>
<feature type="region of interest" description="Disordered" evidence="4">
    <location>
        <begin position="1"/>
        <end position="132"/>
    </location>
</feature>
<feature type="coiled-coil region" evidence="3">
    <location>
        <begin position="125"/>
        <end position="167"/>
    </location>
</feature>
<feature type="compositionally biased region" description="Polar residues" evidence="4">
    <location>
        <begin position="24"/>
        <end position="34"/>
    </location>
</feature>
<feature type="compositionally biased region" description="Basic and acidic residues" evidence="4">
    <location>
        <begin position="52"/>
        <end position="84"/>
    </location>
</feature>
<feature type="compositionally biased region" description="Acidic residues" evidence="4">
    <location>
        <begin position="104"/>
        <end position="128"/>
    </location>
</feature>
<feature type="modified residue" description="N-acetylthreonine" evidence="2">
    <location>
        <position position="2"/>
    </location>
</feature>
<feature type="modified residue" description="N6-acetyllysine" evidence="1">
    <location>
        <position position="18"/>
    </location>
</feature>
<feature type="modified residue" description="Phosphothreonine" evidence="2">
    <location>
        <position position="47"/>
    </location>
</feature>
<feature type="modified residue" description="Phosphothreonine" evidence="2">
    <location>
        <position position="110"/>
    </location>
</feature>
<feature type="modified residue" description="Phosphoserine" evidence="2">
    <location>
        <position position="123"/>
    </location>
</feature>
<evidence type="ECO:0000250" key="1">
    <source>
        <dbReference type="UniProtKB" id="Q9JHS9"/>
    </source>
</evidence>
<evidence type="ECO:0000250" key="2">
    <source>
        <dbReference type="UniProtKB" id="Q9P013"/>
    </source>
</evidence>
<evidence type="ECO:0000255" key="3"/>
<evidence type="ECO:0000256" key="4">
    <source>
        <dbReference type="SAM" id="MobiDB-lite"/>
    </source>
</evidence>
<evidence type="ECO:0000305" key="5"/>